<feature type="chain" id="PRO_0000181999" description="Probable lipid II flippase MurJ">
    <location>
        <begin position="1"/>
        <end position="506"/>
    </location>
</feature>
<feature type="transmembrane region" description="Helical" evidence="1">
    <location>
        <begin position="4"/>
        <end position="24"/>
    </location>
</feature>
<feature type="transmembrane region" description="Helical" evidence="1">
    <location>
        <begin position="86"/>
        <end position="106"/>
    </location>
</feature>
<feature type="transmembrane region" description="Helical" evidence="1">
    <location>
        <begin position="127"/>
        <end position="147"/>
    </location>
</feature>
<feature type="transmembrane region" description="Helical" evidence="1">
    <location>
        <begin position="153"/>
        <end position="173"/>
    </location>
</feature>
<feature type="transmembrane region" description="Helical" evidence="1">
    <location>
        <begin position="181"/>
        <end position="201"/>
    </location>
</feature>
<feature type="transmembrane region" description="Helical" evidence="1">
    <location>
        <begin position="232"/>
        <end position="252"/>
    </location>
</feature>
<feature type="transmembrane region" description="Helical" evidence="1">
    <location>
        <begin position="263"/>
        <end position="283"/>
    </location>
</feature>
<feature type="transmembrane region" description="Helical" evidence="1">
    <location>
        <begin position="308"/>
        <end position="328"/>
    </location>
</feature>
<feature type="transmembrane region" description="Helical" evidence="1">
    <location>
        <begin position="345"/>
        <end position="365"/>
    </location>
</feature>
<feature type="transmembrane region" description="Helical" evidence="1">
    <location>
        <begin position="377"/>
        <end position="397"/>
    </location>
</feature>
<feature type="transmembrane region" description="Helical" evidence="1">
    <location>
        <begin position="405"/>
        <end position="425"/>
    </location>
</feature>
<feature type="transmembrane region" description="Helical" evidence="1">
    <location>
        <begin position="436"/>
        <end position="456"/>
    </location>
</feature>
<feature type="transmembrane region" description="Helical" evidence="1">
    <location>
        <begin position="474"/>
        <end position="494"/>
    </location>
</feature>
<protein>
    <recommendedName>
        <fullName evidence="1">Probable lipid II flippase MurJ</fullName>
    </recommendedName>
</protein>
<organism>
    <name type="scientific">Borreliella burgdorferi (strain ATCC 35210 / DSM 4680 / CIP 102532 / B31)</name>
    <name type="common">Borrelia burgdorferi</name>
    <dbReference type="NCBI Taxonomy" id="224326"/>
    <lineage>
        <taxon>Bacteria</taxon>
        <taxon>Pseudomonadati</taxon>
        <taxon>Spirochaetota</taxon>
        <taxon>Spirochaetia</taxon>
        <taxon>Spirochaetales</taxon>
        <taxon>Borreliaceae</taxon>
        <taxon>Borreliella</taxon>
    </lineage>
</organism>
<sequence>MNKYVVSTILVMISTFFSRIMGFVKIKIFSYYFGANLDADIFNYVFNIPNNLRKILSEGAMTSAFLPEFTHEKNKSHEKAVSFFRTVITFNIISIGLIVLVMIIFAKPIMYFISYYRGENLIFASSVFGYLVLYILLISLSSIFVSVLNSYKIFFIPSFSPIMLSFGIILSIFLFYGRFGIYSAVIGVIFGGFLQFLIPFANCLMIGFAWKPTFYFREKVFLNFLTRWLRMIFGFSISIITQQISFALASTLEIGSVSILSNAVVYYQLPVGIFYISIATVIFPKMAEHAVLGNNIKLNALLVDGIKILLLIFIPVSFLMFIWSDYILNLFLMGGKFSIYDTQKTASVLKCFLLGLLFYSMFGFFQKYYFSIRDAKTPFYLSVLFSILDIAISVFGINYYGLNALALAQSISFMICVIVFYFIILKRGVKIDLIEILFVLLKSIITLFPLYAIYFFFEKFQWDVGFSFKNLYFLMAAGIVSIFVLFICYSVLGINKLFRYIRRDAL</sequence>
<dbReference type="EMBL" id="AE000783">
    <property type="protein sequence ID" value="AAC67146.2"/>
    <property type="molecule type" value="Genomic_DNA"/>
</dbReference>
<dbReference type="PIR" id="A70201">
    <property type="entry name" value="A70201"/>
</dbReference>
<dbReference type="RefSeq" id="NP_212944.2">
    <property type="nucleotide sequence ID" value="NC_001318.1"/>
</dbReference>
<dbReference type="RefSeq" id="WP_010889824.1">
    <property type="nucleotide sequence ID" value="NC_001318.1"/>
</dbReference>
<dbReference type="SMR" id="O51750"/>
<dbReference type="STRING" id="224326.BB_0810"/>
<dbReference type="PaxDb" id="224326-BB_0810"/>
<dbReference type="EnsemblBacteria" id="AAC67146">
    <property type="protein sequence ID" value="AAC67146"/>
    <property type="gene ID" value="BB_0810"/>
</dbReference>
<dbReference type="KEGG" id="bbu:BB_0810"/>
<dbReference type="PATRIC" id="fig|224326.49.peg.1202"/>
<dbReference type="HOGENOM" id="CLU_006797_5_2_12"/>
<dbReference type="OrthoDB" id="9804143at2"/>
<dbReference type="UniPathway" id="UPA00219"/>
<dbReference type="Proteomes" id="UP000001807">
    <property type="component" value="Chromosome"/>
</dbReference>
<dbReference type="GO" id="GO:0005886">
    <property type="term" value="C:plasma membrane"/>
    <property type="evidence" value="ECO:0007669"/>
    <property type="project" value="UniProtKB-SubCell"/>
</dbReference>
<dbReference type="GO" id="GO:0015648">
    <property type="term" value="F:lipid-linked peptidoglycan transporter activity"/>
    <property type="evidence" value="ECO:0007669"/>
    <property type="project" value="UniProtKB-UniRule"/>
</dbReference>
<dbReference type="GO" id="GO:0071555">
    <property type="term" value="P:cell wall organization"/>
    <property type="evidence" value="ECO:0007669"/>
    <property type="project" value="UniProtKB-KW"/>
</dbReference>
<dbReference type="GO" id="GO:0034204">
    <property type="term" value="P:lipid translocation"/>
    <property type="evidence" value="ECO:0007669"/>
    <property type="project" value="TreeGrafter"/>
</dbReference>
<dbReference type="GO" id="GO:0009252">
    <property type="term" value="P:peptidoglycan biosynthetic process"/>
    <property type="evidence" value="ECO:0007669"/>
    <property type="project" value="UniProtKB-UniRule"/>
</dbReference>
<dbReference type="GO" id="GO:0008360">
    <property type="term" value="P:regulation of cell shape"/>
    <property type="evidence" value="ECO:0007669"/>
    <property type="project" value="UniProtKB-KW"/>
</dbReference>
<dbReference type="CDD" id="cd13123">
    <property type="entry name" value="MATE_MurJ_like"/>
    <property type="match status" value="1"/>
</dbReference>
<dbReference type="HAMAP" id="MF_02078">
    <property type="entry name" value="MurJ_MviN"/>
    <property type="match status" value="1"/>
</dbReference>
<dbReference type="InterPro" id="IPR051050">
    <property type="entry name" value="Lipid_II_flippase_MurJ/MviN"/>
</dbReference>
<dbReference type="InterPro" id="IPR004268">
    <property type="entry name" value="MurJ"/>
</dbReference>
<dbReference type="NCBIfam" id="TIGR01695">
    <property type="entry name" value="murJ_mviN"/>
    <property type="match status" value="1"/>
</dbReference>
<dbReference type="PANTHER" id="PTHR47019">
    <property type="entry name" value="LIPID II FLIPPASE MURJ"/>
    <property type="match status" value="1"/>
</dbReference>
<dbReference type="PANTHER" id="PTHR47019:SF1">
    <property type="entry name" value="LIPID II FLIPPASE MURJ"/>
    <property type="match status" value="1"/>
</dbReference>
<dbReference type="Pfam" id="PF03023">
    <property type="entry name" value="MurJ"/>
    <property type="match status" value="1"/>
</dbReference>
<dbReference type="PIRSF" id="PIRSF002869">
    <property type="entry name" value="MviN"/>
    <property type="match status" value="1"/>
</dbReference>
<dbReference type="PRINTS" id="PR01806">
    <property type="entry name" value="VIRFACTRMVIN"/>
</dbReference>
<comment type="function">
    <text evidence="1">Involved in peptidoglycan biosynthesis. Transports lipid-linked peptidoglycan precursors from the inner to the outer leaflet of the cytoplasmic membrane.</text>
</comment>
<comment type="pathway">
    <text evidence="1">Cell wall biogenesis; peptidoglycan biosynthesis.</text>
</comment>
<comment type="subcellular location">
    <subcellularLocation>
        <location evidence="1">Cell inner membrane</location>
        <topology evidence="1">Multi-pass membrane protein</topology>
    </subcellularLocation>
</comment>
<comment type="similarity">
    <text evidence="1">Belongs to the MurJ/MviN family.</text>
</comment>
<proteinExistence type="inferred from homology"/>
<accession>O51750</accession>
<evidence type="ECO:0000255" key="1">
    <source>
        <dbReference type="HAMAP-Rule" id="MF_02078"/>
    </source>
</evidence>
<gene>
    <name evidence="1" type="primary">murJ</name>
    <name type="synonym">mviN</name>
    <name type="ordered locus">BB_0810</name>
</gene>
<keyword id="KW-0997">Cell inner membrane</keyword>
<keyword id="KW-1003">Cell membrane</keyword>
<keyword id="KW-0133">Cell shape</keyword>
<keyword id="KW-0961">Cell wall biogenesis/degradation</keyword>
<keyword id="KW-0472">Membrane</keyword>
<keyword id="KW-0573">Peptidoglycan synthesis</keyword>
<keyword id="KW-1185">Reference proteome</keyword>
<keyword id="KW-0812">Transmembrane</keyword>
<keyword id="KW-1133">Transmembrane helix</keyword>
<keyword id="KW-0813">Transport</keyword>
<name>MURJ_BORBU</name>
<reference key="1">
    <citation type="journal article" date="1997" name="Nature">
        <title>Genomic sequence of a Lyme disease spirochaete, Borrelia burgdorferi.</title>
        <authorList>
            <person name="Fraser C.M."/>
            <person name="Casjens S."/>
            <person name="Huang W.M."/>
            <person name="Sutton G.G."/>
            <person name="Clayton R.A."/>
            <person name="Lathigra R."/>
            <person name="White O."/>
            <person name="Ketchum K.A."/>
            <person name="Dodson R.J."/>
            <person name="Hickey E.K."/>
            <person name="Gwinn M.L."/>
            <person name="Dougherty B.A."/>
            <person name="Tomb J.-F."/>
            <person name="Fleischmann R.D."/>
            <person name="Richardson D.L."/>
            <person name="Peterson J.D."/>
            <person name="Kerlavage A.R."/>
            <person name="Quackenbush J."/>
            <person name="Salzberg S.L."/>
            <person name="Hanson M."/>
            <person name="van Vugt R."/>
            <person name="Palmer N."/>
            <person name="Adams M.D."/>
            <person name="Gocayne J.D."/>
            <person name="Weidman J.F."/>
            <person name="Utterback T.R."/>
            <person name="Watthey L."/>
            <person name="McDonald L.A."/>
            <person name="Artiach P."/>
            <person name="Bowman C."/>
            <person name="Garland S.A."/>
            <person name="Fujii C."/>
            <person name="Cotton M.D."/>
            <person name="Horst K."/>
            <person name="Roberts K.M."/>
            <person name="Hatch B."/>
            <person name="Smith H.O."/>
            <person name="Venter J.C."/>
        </authorList>
    </citation>
    <scope>NUCLEOTIDE SEQUENCE [LARGE SCALE GENOMIC DNA]</scope>
    <source>
        <strain>ATCC 35210 / DSM 4680 / CIP 102532 / B31</strain>
    </source>
</reference>